<organism>
    <name type="scientific">Hydrophis hardwickii</name>
    <name type="common">Hardwick's spine-bellied seasnake</name>
    <name type="synonym">Lapemis hardwickii</name>
    <dbReference type="NCBI Taxonomy" id="8781"/>
    <lineage>
        <taxon>Eukaryota</taxon>
        <taxon>Metazoa</taxon>
        <taxon>Chordata</taxon>
        <taxon>Craniata</taxon>
        <taxon>Vertebrata</taxon>
        <taxon>Euteleostomi</taxon>
        <taxon>Lepidosauria</taxon>
        <taxon>Squamata</taxon>
        <taxon>Bifurcata</taxon>
        <taxon>Unidentata</taxon>
        <taxon>Episquamata</taxon>
        <taxon>Toxicofera</taxon>
        <taxon>Serpentes</taxon>
        <taxon>Colubroidea</taxon>
        <taxon>Elapidae</taxon>
        <taxon>Hydrophiinae</taxon>
        <taxon>Hydrophis</taxon>
    </lineage>
</organism>
<keyword id="KW-0008">Acetylcholine receptor inhibiting toxin</keyword>
<keyword id="KW-1015">Disulfide bond</keyword>
<keyword id="KW-0872">Ion channel impairing toxin</keyword>
<keyword id="KW-0528">Neurotoxin</keyword>
<keyword id="KW-0629">Postsynaptic neurotoxin</keyword>
<keyword id="KW-0964">Secreted</keyword>
<keyword id="KW-0732">Signal</keyword>
<keyword id="KW-0800">Toxin</keyword>
<name>3S116_HYDHA</name>
<feature type="signal peptide" evidence="4">
    <location>
        <begin position="1"/>
        <end position="21"/>
    </location>
</feature>
<feature type="chain" id="PRO_0000316173" description="Short neurotoxin SN160">
    <location>
        <begin position="22"/>
        <end position="81"/>
    </location>
</feature>
<feature type="disulfide bond" evidence="2">
    <location>
        <begin position="24"/>
        <end position="43"/>
    </location>
</feature>
<feature type="disulfide bond" evidence="2">
    <location>
        <begin position="38"/>
        <end position="60"/>
    </location>
</feature>
<feature type="disulfide bond" evidence="2">
    <location>
        <begin position="62"/>
        <end position="73"/>
    </location>
</feature>
<feature type="disulfide bond" evidence="2">
    <location>
        <begin position="74"/>
        <end position="79"/>
    </location>
</feature>
<comment type="function">
    <text evidence="3">Binds to muscle nicotinic acetylcholine receptor (nAChR) and inhibit acetylcholine from binding to the receptor, thereby impairing neuromuscular transmission.</text>
</comment>
<comment type="subcellular location">
    <subcellularLocation>
        <location evidence="1">Secreted</location>
    </subcellularLocation>
</comment>
<comment type="tissue specificity">
    <text evidence="6">Expressed by the venom gland.</text>
</comment>
<comment type="toxic dose">
    <text evidence="5">LD(50) is 0.2192 by intraperitoneal injection into mice.</text>
</comment>
<comment type="similarity">
    <text evidence="6">Belongs to the three-finger toxin family. Short-chain subfamily. Type I alpha-neurotoxin sub-subfamily.</text>
</comment>
<proteinExistence type="inferred from homology"/>
<protein>
    <recommendedName>
        <fullName>Short neurotoxin SN160</fullName>
    </recommendedName>
</protein>
<reference key="1">
    <citation type="journal article" date="2001" name="Sheng Wu Hua Xue Yu Sheng Wu Wu Li Xue Bao">
        <title>Identification and functional characterization of three postsynaptic short-chain neurotoxins from hydrophiinae, Lapemis hardwickii Gray.</title>
        <authorList>
            <person name="Zhong X.F."/>
            <person name="Peng L.S."/>
            <person name="Wu W.Y."/>
            <person name="Wei J.W."/>
            <person name="Yang H."/>
            <person name="Yang Y.Z."/>
            <person name="Xu A.L."/>
        </authorList>
    </citation>
    <scope>NUCLEOTIDE SEQUENCE [MRNA]</scope>
    <scope>TOXIC DOSE</scope>
    <source>
        <tissue>Venom gland</tissue>
    </source>
</reference>
<evidence type="ECO:0000250" key="1"/>
<evidence type="ECO:0000250" key="2">
    <source>
        <dbReference type="UniProtKB" id="P0C1Z0"/>
    </source>
</evidence>
<evidence type="ECO:0000250" key="3">
    <source>
        <dbReference type="UniProtKB" id="P60775"/>
    </source>
</evidence>
<evidence type="ECO:0000255" key="4"/>
<evidence type="ECO:0000269" key="5">
    <source>
    </source>
</evidence>
<evidence type="ECO:0000305" key="6"/>
<dbReference type="EMBL" id="AF159539">
    <property type="protein sequence ID" value="AAL54894.1"/>
    <property type="molecule type" value="mRNA"/>
</dbReference>
<dbReference type="SMR" id="Q8UW27"/>
<dbReference type="GO" id="GO:0005576">
    <property type="term" value="C:extracellular region"/>
    <property type="evidence" value="ECO:0007669"/>
    <property type="project" value="UniProtKB-SubCell"/>
</dbReference>
<dbReference type="GO" id="GO:0030550">
    <property type="term" value="F:acetylcholine receptor inhibitor activity"/>
    <property type="evidence" value="ECO:0007669"/>
    <property type="project" value="UniProtKB-KW"/>
</dbReference>
<dbReference type="GO" id="GO:0099106">
    <property type="term" value="F:ion channel regulator activity"/>
    <property type="evidence" value="ECO:0007669"/>
    <property type="project" value="UniProtKB-KW"/>
</dbReference>
<dbReference type="GO" id="GO:0090729">
    <property type="term" value="F:toxin activity"/>
    <property type="evidence" value="ECO:0007669"/>
    <property type="project" value="UniProtKB-KW"/>
</dbReference>
<dbReference type="CDD" id="cd00206">
    <property type="entry name" value="TFP_snake_toxin"/>
    <property type="match status" value="1"/>
</dbReference>
<dbReference type="Gene3D" id="2.10.60.10">
    <property type="entry name" value="CD59"/>
    <property type="match status" value="1"/>
</dbReference>
<dbReference type="InterPro" id="IPR003571">
    <property type="entry name" value="Snake_3FTx"/>
</dbReference>
<dbReference type="InterPro" id="IPR045860">
    <property type="entry name" value="Snake_toxin-like_sf"/>
</dbReference>
<dbReference type="InterPro" id="IPR018354">
    <property type="entry name" value="Snake_toxin_con_site"/>
</dbReference>
<dbReference type="InterPro" id="IPR054131">
    <property type="entry name" value="Toxin_cobra-type"/>
</dbReference>
<dbReference type="Pfam" id="PF21947">
    <property type="entry name" value="Toxin_cobra-type"/>
    <property type="match status" value="1"/>
</dbReference>
<dbReference type="SUPFAM" id="SSF57302">
    <property type="entry name" value="Snake toxin-like"/>
    <property type="match status" value="1"/>
</dbReference>
<dbReference type="PROSITE" id="PS00272">
    <property type="entry name" value="SNAKE_TOXIN"/>
    <property type="match status" value="1"/>
</dbReference>
<sequence>MKTLLLTLVVVTIVCLDLGYTMTCCNQQSSQPKTTTNCAESSCYKKTWSDHRGTRIERGCGCPQVKRGIKLECCHTNECNN</sequence>
<accession>Q8UW27</accession>